<name>YCZO_BACSU</name>
<dbReference type="EMBL" id="AL009126">
    <property type="protein sequence ID" value="CAX52550.1"/>
    <property type="molecule type" value="Genomic_DNA"/>
</dbReference>
<dbReference type="RefSeq" id="WP_003234425.1">
    <property type="nucleotide sequence ID" value="NZ_OZ025638.1"/>
</dbReference>
<dbReference type="RefSeq" id="YP_003097679.1">
    <property type="nucleotide sequence ID" value="NC_000964.3"/>
</dbReference>
<dbReference type="SMR" id="C0H3V3"/>
<dbReference type="FunCoup" id="C0H3V3">
    <property type="interactions" value="22"/>
</dbReference>
<dbReference type="STRING" id="224308.BSU04039"/>
<dbReference type="PaxDb" id="224308-BSU04039"/>
<dbReference type="EnsemblBacteria" id="CAX52550">
    <property type="protein sequence ID" value="CAX52550"/>
    <property type="gene ID" value="BSU_04039"/>
</dbReference>
<dbReference type="GeneID" id="8302943"/>
<dbReference type="KEGG" id="bsu:BSU04039"/>
<dbReference type="PATRIC" id="fig|224308.179.peg.429"/>
<dbReference type="InParanoid" id="C0H3V3"/>
<dbReference type="OrthoDB" id="2917411at2"/>
<dbReference type="BioCyc" id="BSUB:BSU04039-MONOMER"/>
<dbReference type="Proteomes" id="UP000001570">
    <property type="component" value="Chromosome"/>
</dbReference>
<accession>C0H3V3</accession>
<reference key="1">
    <citation type="journal article" date="1997" name="Nature">
        <title>The complete genome sequence of the Gram-positive bacterium Bacillus subtilis.</title>
        <authorList>
            <person name="Kunst F."/>
            <person name="Ogasawara N."/>
            <person name="Moszer I."/>
            <person name="Albertini A.M."/>
            <person name="Alloni G."/>
            <person name="Azevedo V."/>
            <person name="Bertero M.G."/>
            <person name="Bessieres P."/>
            <person name="Bolotin A."/>
            <person name="Borchert S."/>
            <person name="Borriss R."/>
            <person name="Boursier L."/>
            <person name="Brans A."/>
            <person name="Braun M."/>
            <person name="Brignell S.C."/>
            <person name="Bron S."/>
            <person name="Brouillet S."/>
            <person name="Bruschi C.V."/>
            <person name="Caldwell B."/>
            <person name="Capuano V."/>
            <person name="Carter N.M."/>
            <person name="Choi S.-K."/>
            <person name="Codani J.-J."/>
            <person name="Connerton I.F."/>
            <person name="Cummings N.J."/>
            <person name="Daniel R.A."/>
            <person name="Denizot F."/>
            <person name="Devine K.M."/>
            <person name="Duesterhoeft A."/>
            <person name="Ehrlich S.D."/>
            <person name="Emmerson P.T."/>
            <person name="Entian K.-D."/>
            <person name="Errington J."/>
            <person name="Fabret C."/>
            <person name="Ferrari E."/>
            <person name="Foulger D."/>
            <person name="Fritz C."/>
            <person name="Fujita M."/>
            <person name="Fujita Y."/>
            <person name="Fuma S."/>
            <person name="Galizzi A."/>
            <person name="Galleron N."/>
            <person name="Ghim S.-Y."/>
            <person name="Glaser P."/>
            <person name="Goffeau A."/>
            <person name="Golightly E.J."/>
            <person name="Grandi G."/>
            <person name="Guiseppi G."/>
            <person name="Guy B.J."/>
            <person name="Haga K."/>
            <person name="Haiech J."/>
            <person name="Harwood C.R."/>
            <person name="Henaut A."/>
            <person name="Hilbert H."/>
            <person name="Holsappel S."/>
            <person name="Hosono S."/>
            <person name="Hullo M.-F."/>
            <person name="Itaya M."/>
            <person name="Jones L.-M."/>
            <person name="Joris B."/>
            <person name="Karamata D."/>
            <person name="Kasahara Y."/>
            <person name="Klaerr-Blanchard M."/>
            <person name="Klein C."/>
            <person name="Kobayashi Y."/>
            <person name="Koetter P."/>
            <person name="Koningstein G."/>
            <person name="Krogh S."/>
            <person name="Kumano M."/>
            <person name="Kurita K."/>
            <person name="Lapidus A."/>
            <person name="Lardinois S."/>
            <person name="Lauber J."/>
            <person name="Lazarevic V."/>
            <person name="Lee S.-M."/>
            <person name="Levine A."/>
            <person name="Liu H."/>
            <person name="Masuda S."/>
            <person name="Mauel C."/>
            <person name="Medigue C."/>
            <person name="Medina N."/>
            <person name="Mellado R.P."/>
            <person name="Mizuno M."/>
            <person name="Moestl D."/>
            <person name="Nakai S."/>
            <person name="Noback M."/>
            <person name="Noone D."/>
            <person name="O'Reilly M."/>
            <person name="Ogawa K."/>
            <person name="Ogiwara A."/>
            <person name="Oudega B."/>
            <person name="Park S.-H."/>
            <person name="Parro V."/>
            <person name="Pohl T.M."/>
            <person name="Portetelle D."/>
            <person name="Porwollik S."/>
            <person name="Prescott A.M."/>
            <person name="Presecan E."/>
            <person name="Pujic P."/>
            <person name="Purnelle B."/>
            <person name="Rapoport G."/>
            <person name="Rey M."/>
            <person name="Reynolds S."/>
            <person name="Rieger M."/>
            <person name="Rivolta C."/>
            <person name="Rocha E."/>
            <person name="Roche B."/>
            <person name="Rose M."/>
            <person name="Sadaie Y."/>
            <person name="Sato T."/>
            <person name="Scanlan E."/>
            <person name="Schleich S."/>
            <person name="Schroeter R."/>
            <person name="Scoffone F."/>
            <person name="Sekiguchi J."/>
            <person name="Sekowska A."/>
            <person name="Seror S.J."/>
            <person name="Serror P."/>
            <person name="Shin B.-S."/>
            <person name="Soldo B."/>
            <person name="Sorokin A."/>
            <person name="Tacconi E."/>
            <person name="Takagi T."/>
            <person name="Takahashi H."/>
            <person name="Takemaru K."/>
            <person name="Takeuchi M."/>
            <person name="Tamakoshi A."/>
            <person name="Tanaka T."/>
            <person name="Terpstra P."/>
            <person name="Tognoni A."/>
            <person name="Tosato V."/>
            <person name="Uchiyama S."/>
            <person name="Vandenbol M."/>
            <person name="Vannier F."/>
            <person name="Vassarotti A."/>
            <person name="Viari A."/>
            <person name="Wambutt R."/>
            <person name="Wedler E."/>
            <person name="Wedler H."/>
            <person name="Weitzenegger T."/>
            <person name="Winters P."/>
            <person name="Wipat A."/>
            <person name="Yamamoto H."/>
            <person name="Yamane K."/>
            <person name="Yasumoto K."/>
            <person name="Yata K."/>
            <person name="Yoshida K."/>
            <person name="Yoshikawa H.-F."/>
            <person name="Zumstein E."/>
            <person name="Yoshikawa H."/>
            <person name="Danchin A."/>
        </authorList>
    </citation>
    <scope>NUCLEOTIDE SEQUENCE [LARGE SCALE GENOMIC DNA]</scope>
    <source>
        <strain>168</strain>
    </source>
</reference>
<feature type="chain" id="PRO_0000380071" description="Uncharacterized protein YczO">
    <location>
        <begin position="1"/>
        <end position="54"/>
    </location>
</feature>
<feature type="region of interest" description="Disordered" evidence="1">
    <location>
        <begin position="1"/>
        <end position="54"/>
    </location>
</feature>
<feature type="compositionally biased region" description="Basic and acidic residues" evidence="1">
    <location>
        <begin position="1"/>
        <end position="19"/>
    </location>
</feature>
<feature type="compositionally biased region" description="Basic and acidic residues" evidence="1">
    <location>
        <begin position="26"/>
        <end position="54"/>
    </location>
</feature>
<sequence length="54" mass="6566">MTEKKQQNKPNENPEHNDLTDPIPNEELKENMNDEKHKRQQRDNSQSERDYDTK</sequence>
<gene>
    <name type="primary">yczO</name>
    <name type="ordered locus">BSU04039</name>
</gene>
<evidence type="ECO:0000256" key="1">
    <source>
        <dbReference type="SAM" id="MobiDB-lite"/>
    </source>
</evidence>
<proteinExistence type="predicted"/>
<protein>
    <recommendedName>
        <fullName>Uncharacterized protein YczO</fullName>
    </recommendedName>
</protein>
<keyword id="KW-1185">Reference proteome</keyword>
<organism>
    <name type="scientific">Bacillus subtilis (strain 168)</name>
    <dbReference type="NCBI Taxonomy" id="224308"/>
    <lineage>
        <taxon>Bacteria</taxon>
        <taxon>Bacillati</taxon>
        <taxon>Bacillota</taxon>
        <taxon>Bacilli</taxon>
        <taxon>Bacillales</taxon>
        <taxon>Bacillaceae</taxon>
        <taxon>Bacillus</taxon>
    </lineage>
</organism>